<gene>
    <name evidence="1" type="primary">thrB</name>
    <name type="ordered locus">Spro_0684</name>
</gene>
<name>KHSE_SERP5</name>
<evidence type="ECO:0000255" key="1">
    <source>
        <dbReference type="HAMAP-Rule" id="MF_00384"/>
    </source>
</evidence>
<organism>
    <name type="scientific">Serratia proteamaculans (strain 568)</name>
    <dbReference type="NCBI Taxonomy" id="399741"/>
    <lineage>
        <taxon>Bacteria</taxon>
        <taxon>Pseudomonadati</taxon>
        <taxon>Pseudomonadota</taxon>
        <taxon>Gammaproteobacteria</taxon>
        <taxon>Enterobacterales</taxon>
        <taxon>Yersiniaceae</taxon>
        <taxon>Serratia</taxon>
    </lineage>
</organism>
<dbReference type="EC" id="2.7.1.39" evidence="1"/>
<dbReference type="EMBL" id="CP000826">
    <property type="protein sequence ID" value="ABV39790.1"/>
    <property type="molecule type" value="Genomic_DNA"/>
</dbReference>
<dbReference type="SMR" id="A8G9K0"/>
<dbReference type="STRING" id="399741.Spro_0684"/>
<dbReference type="KEGG" id="spe:Spro_0684"/>
<dbReference type="eggNOG" id="COG0083">
    <property type="taxonomic scope" value="Bacteria"/>
</dbReference>
<dbReference type="HOGENOM" id="CLU_041243_1_1_6"/>
<dbReference type="OrthoDB" id="9769912at2"/>
<dbReference type="UniPathway" id="UPA00050">
    <property type="reaction ID" value="UER00064"/>
</dbReference>
<dbReference type="GO" id="GO:0005737">
    <property type="term" value="C:cytoplasm"/>
    <property type="evidence" value="ECO:0007669"/>
    <property type="project" value="UniProtKB-SubCell"/>
</dbReference>
<dbReference type="GO" id="GO:0005524">
    <property type="term" value="F:ATP binding"/>
    <property type="evidence" value="ECO:0007669"/>
    <property type="project" value="UniProtKB-UniRule"/>
</dbReference>
<dbReference type="GO" id="GO:0004413">
    <property type="term" value="F:homoserine kinase activity"/>
    <property type="evidence" value="ECO:0007669"/>
    <property type="project" value="UniProtKB-UniRule"/>
</dbReference>
<dbReference type="GO" id="GO:0009088">
    <property type="term" value="P:threonine biosynthetic process"/>
    <property type="evidence" value="ECO:0007669"/>
    <property type="project" value="UniProtKB-UniRule"/>
</dbReference>
<dbReference type="FunFam" id="3.30.230.10:FF:000020">
    <property type="entry name" value="Homoserine kinase"/>
    <property type="match status" value="1"/>
</dbReference>
<dbReference type="FunFam" id="3.30.70.890:FF:000002">
    <property type="entry name" value="Homoserine kinase"/>
    <property type="match status" value="1"/>
</dbReference>
<dbReference type="Gene3D" id="3.30.230.10">
    <property type="match status" value="1"/>
</dbReference>
<dbReference type="Gene3D" id="3.30.70.890">
    <property type="entry name" value="GHMP kinase, C-terminal domain"/>
    <property type="match status" value="1"/>
</dbReference>
<dbReference type="HAMAP" id="MF_00384">
    <property type="entry name" value="Homoser_kinase"/>
    <property type="match status" value="1"/>
</dbReference>
<dbReference type="InterPro" id="IPR013750">
    <property type="entry name" value="GHMP_kinase_C_dom"/>
</dbReference>
<dbReference type="InterPro" id="IPR036554">
    <property type="entry name" value="GHMP_kinase_C_sf"/>
</dbReference>
<dbReference type="InterPro" id="IPR006204">
    <property type="entry name" value="GHMP_kinase_N_dom"/>
</dbReference>
<dbReference type="InterPro" id="IPR006203">
    <property type="entry name" value="GHMP_knse_ATP-bd_CS"/>
</dbReference>
<dbReference type="InterPro" id="IPR000870">
    <property type="entry name" value="Homoserine_kinase"/>
</dbReference>
<dbReference type="InterPro" id="IPR020568">
    <property type="entry name" value="Ribosomal_Su5_D2-typ_SF"/>
</dbReference>
<dbReference type="InterPro" id="IPR014721">
    <property type="entry name" value="Ribsml_uS5_D2-typ_fold_subgr"/>
</dbReference>
<dbReference type="NCBIfam" id="NF002288">
    <property type="entry name" value="PRK01212.1-4"/>
    <property type="match status" value="1"/>
</dbReference>
<dbReference type="NCBIfam" id="TIGR00191">
    <property type="entry name" value="thrB"/>
    <property type="match status" value="1"/>
</dbReference>
<dbReference type="PANTHER" id="PTHR20861:SF1">
    <property type="entry name" value="HOMOSERINE KINASE"/>
    <property type="match status" value="1"/>
</dbReference>
<dbReference type="PANTHER" id="PTHR20861">
    <property type="entry name" value="HOMOSERINE/4-DIPHOSPHOCYTIDYL-2-C-METHYL-D-ERYTHRITOL KINASE"/>
    <property type="match status" value="1"/>
</dbReference>
<dbReference type="Pfam" id="PF08544">
    <property type="entry name" value="GHMP_kinases_C"/>
    <property type="match status" value="1"/>
</dbReference>
<dbReference type="Pfam" id="PF00288">
    <property type="entry name" value="GHMP_kinases_N"/>
    <property type="match status" value="1"/>
</dbReference>
<dbReference type="PIRSF" id="PIRSF000676">
    <property type="entry name" value="Homoser_kin"/>
    <property type="match status" value="1"/>
</dbReference>
<dbReference type="PRINTS" id="PR00958">
    <property type="entry name" value="HOMSERKINASE"/>
</dbReference>
<dbReference type="SUPFAM" id="SSF55060">
    <property type="entry name" value="GHMP Kinase, C-terminal domain"/>
    <property type="match status" value="1"/>
</dbReference>
<dbReference type="SUPFAM" id="SSF54211">
    <property type="entry name" value="Ribosomal protein S5 domain 2-like"/>
    <property type="match status" value="1"/>
</dbReference>
<dbReference type="PROSITE" id="PS00627">
    <property type="entry name" value="GHMP_KINASES_ATP"/>
    <property type="match status" value="1"/>
</dbReference>
<accession>A8G9K0</accession>
<feature type="chain" id="PRO_1000060702" description="Homoserine kinase">
    <location>
        <begin position="1"/>
        <end position="309"/>
    </location>
</feature>
<feature type="binding site" evidence="1">
    <location>
        <begin position="91"/>
        <end position="101"/>
    </location>
    <ligand>
        <name>ATP</name>
        <dbReference type="ChEBI" id="CHEBI:30616"/>
    </ligand>
</feature>
<comment type="function">
    <text evidence="1">Catalyzes the ATP-dependent phosphorylation of L-homoserine to L-homoserine phosphate.</text>
</comment>
<comment type="catalytic activity">
    <reaction evidence="1">
        <text>L-homoserine + ATP = O-phospho-L-homoserine + ADP + H(+)</text>
        <dbReference type="Rhea" id="RHEA:13985"/>
        <dbReference type="ChEBI" id="CHEBI:15378"/>
        <dbReference type="ChEBI" id="CHEBI:30616"/>
        <dbReference type="ChEBI" id="CHEBI:57476"/>
        <dbReference type="ChEBI" id="CHEBI:57590"/>
        <dbReference type="ChEBI" id="CHEBI:456216"/>
        <dbReference type="EC" id="2.7.1.39"/>
    </reaction>
</comment>
<comment type="pathway">
    <text evidence="1">Amino-acid biosynthesis; L-threonine biosynthesis; L-threonine from L-aspartate: step 4/5.</text>
</comment>
<comment type="subcellular location">
    <subcellularLocation>
        <location evidence="1">Cytoplasm</location>
    </subcellularLocation>
</comment>
<comment type="similarity">
    <text evidence="1">Belongs to the GHMP kinase family. Homoserine kinase subfamily.</text>
</comment>
<proteinExistence type="inferred from homology"/>
<keyword id="KW-0028">Amino-acid biosynthesis</keyword>
<keyword id="KW-0067">ATP-binding</keyword>
<keyword id="KW-0963">Cytoplasm</keyword>
<keyword id="KW-0418">Kinase</keyword>
<keyword id="KW-0547">Nucleotide-binding</keyword>
<keyword id="KW-0791">Threonine biosynthesis</keyword>
<keyword id="KW-0808">Transferase</keyword>
<reference key="1">
    <citation type="submission" date="2007-09" db="EMBL/GenBank/DDBJ databases">
        <title>Complete sequence of chromosome of Serratia proteamaculans 568.</title>
        <authorList>
            <consortium name="US DOE Joint Genome Institute"/>
            <person name="Copeland A."/>
            <person name="Lucas S."/>
            <person name="Lapidus A."/>
            <person name="Barry K."/>
            <person name="Glavina del Rio T."/>
            <person name="Dalin E."/>
            <person name="Tice H."/>
            <person name="Pitluck S."/>
            <person name="Chain P."/>
            <person name="Malfatti S."/>
            <person name="Shin M."/>
            <person name="Vergez L."/>
            <person name="Schmutz J."/>
            <person name="Larimer F."/>
            <person name="Land M."/>
            <person name="Hauser L."/>
            <person name="Kyrpides N."/>
            <person name="Kim E."/>
            <person name="Taghavi S."/>
            <person name="Newman L."/>
            <person name="Vangronsveld J."/>
            <person name="van der Lelie D."/>
            <person name="Richardson P."/>
        </authorList>
    </citation>
    <scope>NUCLEOTIDE SEQUENCE [LARGE SCALE GENOMIC DNA]</scope>
    <source>
        <strain>568</strain>
    </source>
</reference>
<sequence length="309" mass="33454">MVKVYAPASIGNVSVGFDVLGAAVSPIDGTLLGDCVSVEAAETFSLQNAGRFVSKLPDDPKENIVYQCWERFCQEIGQQIPVAMRLEKNMPIGSGLGSSACSVVAGLMAMNEFCNRPLDKMTLLGLMGELEGRISGSVHYDNVAPCYLGGLQLMLEEEGFISQEVPCFKDWLWVMAYPGIKVSTAEARAILPAQYRRQDCISHGRYLAGFIHACHTQQPRLAAKLMQDVIAEPYRTRLLPGFADARKAAQDIGALACGISGSGPTLFAVCDDGATAQRMADWLTNHYLQNDEGFVHICRLDTAGARLLG</sequence>
<protein>
    <recommendedName>
        <fullName evidence="1">Homoserine kinase</fullName>
        <shortName evidence="1">HK</shortName>
        <shortName evidence="1">HSK</shortName>
        <ecNumber evidence="1">2.7.1.39</ecNumber>
    </recommendedName>
</protein>